<keyword id="KW-0997">Cell inner membrane</keyword>
<keyword id="KW-1003">Cell membrane</keyword>
<keyword id="KW-0472">Membrane</keyword>
<keyword id="KW-1185">Reference proteome</keyword>
<keyword id="KW-0735">Signal-anchor</keyword>
<keyword id="KW-0346">Stress response</keyword>
<keyword id="KW-0812">Transmembrane</keyword>
<keyword id="KW-1133">Transmembrane helix</keyword>
<name>SAFA_SHIFL</name>
<protein>
    <recommendedName>
        <fullName>Two-component-system connector protein SafA</fullName>
    </recommendedName>
</protein>
<accession>Q7UCH6</accession>
<feature type="chain" id="PRO_0000223720" description="Two-component-system connector protein SafA">
    <location>
        <begin position="1"/>
        <end position="67"/>
    </location>
</feature>
<feature type="topological domain" description="Cytoplasmic" evidence="1">
    <location>
        <begin position="1"/>
        <end position="18"/>
    </location>
</feature>
<feature type="transmembrane region" description="Helical; Signal-anchor for type II membrane protein" evidence="2">
    <location>
        <begin position="19"/>
        <end position="39"/>
    </location>
</feature>
<feature type="topological domain" description="Periplasmic" evidence="1">
    <location>
        <begin position="40"/>
        <end position="65"/>
    </location>
</feature>
<comment type="function">
    <text evidence="1">Connects the signal transduction between the two-component systems EvgS/EvgA and PhoQ/PhoP, by directly interacting with PhoQ and thus activating the PhoQ/PhoP system, in response to acid stress conditions.</text>
</comment>
<comment type="subunit">
    <text evidence="1">Interacts with PhoQ.</text>
</comment>
<comment type="subcellular location">
    <subcellularLocation>
        <location evidence="1">Cell inner membrane</location>
        <topology evidence="1">Single-pass type II membrane protein</topology>
    </subcellularLocation>
</comment>
<comment type="induction">
    <text evidence="1">By acid stress, via the EvgS/EvgA system.</text>
</comment>
<comment type="similarity">
    <text evidence="3">Belongs to the SafA family.</text>
</comment>
<evidence type="ECO:0000250" key="1"/>
<evidence type="ECO:0000255" key="2"/>
<evidence type="ECO:0000305" key="3"/>
<dbReference type="EMBL" id="AE005674">
    <property type="status" value="NOT_ANNOTATED_CDS"/>
    <property type="molecule type" value="Genomic_DNA"/>
</dbReference>
<dbReference type="EMBL" id="AE014073">
    <property type="protein sequence ID" value="AAP17018.1"/>
    <property type="molecule type" value="Genomic_DNA"/>
</dbReference>
<dbReference type="RefSeq" id="WP_000543395.1">
    <property type="nucleotide sequence ID" value="NZ_WPGV01000167.1"/>
</dbReference>
<dbReference type="SMR" id="Q7UCH6"/>
<dbReference type="KEGG" id="sfx:S1655"/>
<dbReference type="PATRIC" id="fig|623.158.peg.1684"/>
<dbReference type="HOGENOM" id="CLU_2842804_0_0_6"/>
<dbReference type="Proteomes" id="UP000001006">
    <property type="component" value="Chromosome"/>
</dbReference>
<dbReference type="Proteomes" id="UP000002673">
    <property type="component" value="Chromosome"/>
</dbReference>
<dbReference type="GO" id="GO:0005886">
    <property type="term" value="C:plasma membrane"/>
    <property type="evidence" value="ECO:0007669"/>
    <property type="project" value="UniProtKB-SubCell"/>
</dbReference>
<dbReference type="InterPro" id="IPR031411">
    <property type="entry name" value="SafA"/>
</dbReference>
<dbReference type="Pfam" id="PF17073">
    <property type="entry name" value="SafA"/>
    <property type="match status" value="1"/>
</dbReference>
<organism>
    <name type="scientific">Shigella flexneri</name>
    <dbReference type="NCBI Taxonomy" id="623"/>
    <lineage>
        <taxon>Bacteria</taxon>
        <taxon>Pseudomonadati</taxon>
        <taxon>Pseudomonadota</taxon>
        <taxon>Gammaproteobacteria</taxon>
        <taxon>Enterobacterales</taxon>
        <taxon>Enterobacteriaceae</taxon>
        <taxon>Shigella</taxon>
    </lineage>
</organism>
<proteinExistence type="inferred from homology"/>
<sequence length="67" mass="7672">MHATTVKNKITQRDNYKEIMSVIVVVLLLTLTLIAIFSAIDQLSISEMGRIARDLTHFIINSLQDWK</sequence>
<gene>
    <name type="primary">safA</name>
    <name type="ordered locus">SF1537.1</name>
    <name type="ordered locus">S1655</name>
</gene>
<reference key="1">
    <citation type="journal article" date="2002" name="Nucleic Acids Res.">
        <title>Genome sequence of Shigella flexneri 2a: insights into pathogenicity through comparison with genomes of Escherichia coli K12 and O157.</title>
        <authorList>
            <person name="Jin Q."/>
            <person name="Yuan Z."/>
            <person name="Xu J."/>
            <person name="Wang Y."/>
            <person name="Shen Y."/>
            <person name="Lu W."/>
            <person name="Wang J."/>
            <person name="Liu H."/>
            <person name="Yang J."/>
            <person name="Yang F."/>
            <person name="Zhang X."/>
            <person name="Zhang J."/>
            <person name="Yang G."/>
            <person name="Wu H."/>
            <person name="Qu D."/>
            <person name="Dong J."/>
            <person name="Sun L."/>
            <person name="Xue Y."/>
            <person name="Zhao A."/>
            <person name="Gao Y."/>
            <person name="Zhu J."/>
            <person name="Kan B."/>
            <person name="Ding K."/>
            <person name="Chen S."/>
            <person name="Cheng H."/>
            <person name="Yao Z."/>
            <person name="He B."/>
            <person name="Chen R."/>
            <person name="Ma D."/>
            <person name="Qiang B."/>
            <person name="Wen Y."/>
            <person name="Hou Y."/>
            <person name="Yu J."/>
        </authorList>
    </citation>
    <scope>NUCLEOTIDE SEQUENCE [LARGE SCALE GENOMIC DNA]</scope>
    <source>
        <strain>301 / Serotype 2a</strain>
    </source>
</reference>
<reference key="2">
    <citation type="journal article" date="2003" name="Infect. Immun.">
        <title>Complete genome sequence and comparative genomics of Shigella flexneri serotype 2a strain 2457T.</title>
        <authorList>
            <person name="Wei J."/>
            <person name="Goldberg M.B."/>
            <person name="Burland V."/>
            <person name="Venkatesan M.M."/>
            <person name="Deng W."/>
            <person name="Fournier G."/>
            <person name="Mayhew G.F."/>
            <person name="Plunkett G. III"/>
            <person name="Rose D.J."/>
            <person name="Darling A."/>
            <person name="Mau B."/>
            <person name="Perna N.T."/>
            <person name="Payne S.M."/>
            <person name="Runyen-Janecky L.J."/>
            <person name="Zhou S."/>
            <person name="Schwartz D.C."/>
            <person name="Blattner F.R."/>
        </authorList>
    </citation>
    <scope>NUCLEOTIDE SEQUENCE [LARGE SCALE GENOMIC DNA]</scope>
    <source>
        <strain>ATCC 700930 / 2457T / Serotype 2a</strain>
    </source>
</reference>